<dbReference type="EMBL" id="CU329671">
    <property type="protein sequence ID" value="CAA22341.1"/>
    <property type="molecule type" value="Genomic_DNA"/>
</dbReference>
<dbReference type="PIR" id="T39506">
    <property type="entry name" value="T39506"/>
</dbReference>
<dbReference type="RefSeq" id="NP_596632.1">
    <property type="nucleotide sequence ID" value="NM_001022553.2"/>
</dbReference>
<dbReference type="SMR" id="O94374"/>
<dbReference type="BioGRID" id="276472">
    <property type="interactions" value="192"/>
</dbReference>
<dbReference type="FunCoup" id="O94374">
    <property type="interactions" value="373"/>
</dbReference>
<dbReference type="IntAct" id="O94374">
    <property type="interactions" value="1"/>
</dbReference>
<dbReference type="STRING" id="284812.O94374"/>
<dbReference type="iPTMnet" id="O94374"/>
<dbReference type="PaxDb" id="4896-SPBC1604.08c.1"/>
<dbReference type="EnsemblFungi" id="SPBC1604.08c.1">
    <property type="protein sequence ID" value="SPBC1604.08c.1:pep"/>
    <property type="gene ID" value="SPBC1604.08c"/>
</dbReference>
<dbReference type="GeneID" id="2539928"/>
<dbReference type="KEGG" id="spo:2539928"/>
<dbReference type="PomBase" id="SPBC1604.08c">
    <property type="gene designation" value="imp1"/>
</dbReference>
<dbReference type="VEuPathDB" id="FungiDB:SPBC1604.08c"/>
<dbReference type="eggNOG" id="KOG0166">
    <property type="taxonomic scope" value="Eukaryota"/>
</dbReference>
<dbReference type="HOGENOM" id="CLU_018084_6_0_1"/>
<dbReference type="InParanoid" id="O94374"/>
<dbReference type="OMA" id="NWSTISV"/>
<dbReference type="PhylomeDB" id="O94374"/>
<dbReference type="Reactome" id="R-SPO-68616">
    <property type="pathway name" value="Assembly of the ORC complex at the origin of replication"/>
</dbReference>
<dbReference type="PRO" id="PR:O94374"/>
<dbReference type="Proteomes" id="UP000002485">
    <property type="component" value="Chromosome II"/>
</dbReference>
<dbReference type="GO" id="GO:0005737">
    <property type="term" value="C:cytoplasm"/>
    <property type="evidence" value="ECO:0000314"/>
    <property type="project" value="PomBase"/>
</dbReference>
<dbReference type="GO" id="GO:0005829">
    <property type="term" value="C:cytosol"/>
    <property type="evidence" value="ECO:0007005"/>
    <property type="project" value="PomBase"/>
</dbReference>
<dbReference type="GO" id="GO:1990023">
    <property type="term" value="C:mitotic spindle midzone"/>
    <property type="evidence" value="ECO:0000314"/>
    <property type="project" value="PomBase"/>
</dbReference>
<dbReference type="GO" id="GO:0005635">
    <property type="term" value="C:nuclear envelope"/>
    <property type="evidence" value="ECO:0007005"/>
    <property type="project" value="PomBase"/>
</dbReference>
<dbReference type="GO" id="GO:0034399">
    <property type="term" value="C:nuclear periphery"/>
    <property type="evidence" value="ECO:0000314"/>
    <property type="project" value="PomBase"/>
</dbReference>
<dbReference type="GO" id="GO:0005643">
    <property type="term" value="C:nuclear pore"/>
    <property type="evidence" value="ECO:0000314"/>
    <property type="project" value="PomBase"/>
</dbReference>
<dbReference type="GO" id="GO:0005730">
    <property type="term" value="C:nucleolus"/>
    <property type="evidence" value="ECO:0000314"/>
    <property type="project" value="PomBase"/>
</dbReference>
<dbReference type="GO" id="GO:0005654">
    <property type="term" value="C:nucleoplasm"/>
    <property type="evidence" value="ECO:0000314"/>
    <property type="project" value="PomBase"/>
</dbReference>
<dbReference type="GO" id="GO:0005634">
    <property type="term" value="C:nucleus"/>
    <property type="evidence" value="ECO:0000314"/>
    <property type="project" value="PomBase"/>
</dbReference>
<dbReference type="GO" id="GO:0005525">
    <property type="term" value="F:GTP binding"/>
    <property type="evidence" value="ECO:0000303"/>
    <property type="project" value="PomBase"/>
</dbReference>
<dbReference type="GO" id="GO:0061608">
    <property type="term" value="F:nuclear import signal receptor activity"/>
    <property type="evidence" value="ECO:0000314"/>
    <property type="project" value="PomBase"/>
</dbReference>
<dbReference type="GO" id="GO:0008139">
    <property type="term" value="F:nuclear localization sequence binding"/>
    <property type="evidence" value="ECO:0000318"/>
    <property type="project" value="GO_Central"/>
</dbReference>
<dbReference type="GO" id="GO:0051301">
    <property type="term" value="P:cell division"/>
    <property type="evidence" value="ECO:0007669"/>
    <property type="project" value="UniProtKB-KW"/>
</dbReference>
<dbReference type="GO" id="GO:0140516">
    <property type="term" value="P:mitotic nuclear pore complex disassembly"/>
    <property type="evidence" value="ECO:0000315"/>
    <property type="project" value="PomBase"/>
</dbReference>
<dbReference type="GO" id="GO:0006607">
    <property type="term" value="P:NLS-bearing protein import into nucleus"/>
    <property type="evidence" value="ECO:0000315"/>
    <property type="project" value="PomBase"/>
</dbReference>
<dbReference type="GO" id="GO:0006606">
    <property type="term" value="P:protein import into nucleus"/>
    <property type="evidence" value="ECO:0000314"/>
    <property type="project" value="PomBase"/>
</dbReference>
<dbReference type="GO" id="GO:1905557">
    <property type="term" value="P:regulation of mitotic nuclear envelope disassembly"/>
    <property type="evidence" value="ECO:0000315"/>
    <property type="project" value="PomBase"/>
</dbReference>
<dbReference type="FunFam" id="1.25.10.10:FF:000021">
    <property type="entry name" value="Importin subunit alpha"/>
    <property type="match status" value="1"/>
</dbReference>
<dbReference type="Gene3D" id="1.20.5.690">
    <property type="entry name" value="Importin-alpha, importin-beta-binding domain"/>
    <property type="match status" value="1"/>
</dbReference>
<dbReference type="Gene3D" id="1.25.10.10">
    <property type="entry name" value="Leucine-rich Repeat Variant"/>
    <property type="match status" value="1"/>
</dbReference>
<dbReference type="InterPro" id="IPR011989">
    <property type="entry name" value="ARM-like"/>
</dbReference>
<dbReference type="InterPro" id="IPR016024">
    <property type="entry name" value="ARM-type_fold"/>
</dbReference>
<dbReference type="InterPro" id="IPR032413">
    <property type="entry name" value="Arm_3"/>
</dbReference>
<dbReference type="InterPro" id="IPR000225">
    <property type="entry name" value="Armadillo"/>
</dbReference>
<dbReference type="InterPro" id="IPR002652">
    <property type="entry name" value="Importin-a_IBB"/>
</dbReference>
<dbReference type="InterPro" id="IPR036975">
    <property type="entry name" value="Importin-a_IBB_sf"/>
</dbReference>
<dbReference type="InterPro" id="IPR024931">
    <property type="entry name" value="Importin_alpha"/>
</dbReference>
<dbReference type="PANTHER" id="PTHR23316">
    <property type="entry name" value="IMPORTIN ALPHA"/>
    <property type="match status" value="1"/>
</dbReference>
<dbReference type="Pfam" id="PF00514">
    <property type="entry name" value="Arm"/>
    <property type="match status" value="8"/>
</dbReference>
<dbReference type="Pfam" id="PF16186">
    <property type="entry name" value="Arm_3"/>
    <property type="match status" value="1"/>
</dbReference>
<dbReference type="Pfam" id="PF01749">
    <property type="entry name" value="IBB"/>
    <property type="match status" value="1"/>
</dbReference>
<dbReference type="PIRSF" id="PIRSF005673">
    <property type="entry name" value="Importin_alpha"/>
    <property type="match status" value="1"/>
</dbReference>
<dbReference type="SMART" id="SM00185">
    <property type="entry name" value="ARM"/>
    <property type="match status" value="8"/>
</dbReference>
<dbReference type="SUPFAM" id="SSF48371">
    <property type="entry name" value="ARM repeat"/>
    <property type="match status" value="1"/>
</dbReference>
<dbReference type="PROSITE" id="PS50176">
    <property type="entry name" value="ARM_REPEAT"/>
    <property type="match status" value="4"/>
</dbReference>
<dbReference type="PROSITE" id="PS51214">
    <property type="entry name" value="IBB"/>
    <property type="match status" value="1"/>
</dbReference>
<evidence type="ECO:0000255" key="1">
    <source>
        <dbReference type="PROSITE-ProRule" id="PRU00561"/>
    </source>
</evidence>
<evidence type="ECO:0000269" key="2">
    <source>
    </source>
</evidence>
<evidence type="ECO:0000269" key="3">
    <source>
    </source>
</evidence>
<evidence type="ECO:0000269" key="4">
    <source>
    </source>
</evidence>
<evidence type="ECO:0000305" key="5"/>
<reference key="1">
    <citation type="journal article" date="2002" name="Nature">
        <title>The genome sequence of Schizosaccharomyces pombe.</title>
        <authorList>
            <person name="Wood V."/>
            <person name="Gwilliam R."/>
            <person name="Rajandream M.A."/>
            <person name="Lyne M.H."/>
            <person name="Lyne R."/>
            <person name="Stewart A."/>
            <person name="Sgouros J.G."/>
            <person name="Peat N."/>
            <person name="Hayles J."/>
            <person name="Baker S.G."/>
            <person name="Basham D."/>
            <person name="Bowman S."/>
            <person name="Brooks K."/>
            <person name="Brown D."/>
            <person name="Brown S."/>
            <person name="Chillingworth T."/>
            <person name="Churcher C.M."/>
            <person name="Collins M."/>
            <person name="Connor R."/>
            <person name="Cronin A."/>
            <person name="Davis P."/>
            <person name="Feltwell T."/>
            <person name="Fraser A."/>
            <person name="Gentles S."/>
            <person name="Goble A."/>
            <person name="Hamlin N."/>
            <person name="Harris D.E."/>
            <person name="Hidalgo J."/>
            <person name="Hodgson G."/>
            <person name="Holroyd S."/>
            <person name="Hornsby T."/>
            <person name="Howarth S."/>
            <person name="Huckle E.J."/>
            <person name="Hunt S."/>
            <person name="Jagels K."/>
            <person name="James K.D."/>
            <person name="Jones L."/>
            <person name="Jones M."/>
            <person name="Leather S."/>
            <person name="McDonald S."/>
            <person name="McLean J."/>
            <person name="Mooney P."/>
            <person name="Moule S."/>
            <person name="Mungall K.L."/>
            <person name="Murphy L.D."/>
            <person name="Niblett D."/>
            <person name="Odell C."/>
            <person name="Oliver K."/>
            <person name="O'Neil S."/>
            <person name="Pearson D."/>
            <person name="Quail M.A."/>
            <person name="Rabbinowitsch E."/>
            <person name="Rutherford K.M."/>
            <person name="Rutter S."/>
            <person name="Saunders D."/>
            <person name="Seeger K."/>
            <person name="Sharp S."/>
            <person name="Skelton J."/>
            <person name="Simmonds M.N."/>
            <person name="Squares R."/>
            <person name="Squares S."/>
            <person name="Stevens K."/>
            <person name="Taylor K."/>
            <person name="Taylor R.G."/>
            <person name="Tivey A."/>
            <person name="Walsh S.V."/>
            <person name="Warren T."/>
            <person name="Whitehead S."/>
            <person name="Woodward J.R."/>
            <person name="Volckaert G."/>
            <person name="Aert R."/>
            <person name="Robben J."/>
            <person name="Grymonprez B."/>
            <person name="Weltjens I."/>
            <person name="Vanstreels E."/>
            <person name="Rieger M."/>
            <person name="Schaefer M."/>
            <person name="Mueller-Auer S."/>
            <person name="Gabel C."/>
            <person name="Fuchs M."/>
            <person name="Duesterhoeft A."/>
            <person name="Fritzc C."/>
            <person name="Holzer E."/>
            <person name="Moestl D."/>
            <person name="Hilbert H."/>
            <person name="Borzym K."/>
            <person name="Langer I."/>
            <person name="Beck A."/>
            <person name="Lehrach H."/>
            <person name="Reinhardt R."/>
            <person name="Pohl T.M."/>
            <person name="Eger P."/>
            <person name="Zimmermann W."/>
            <person name="Wedler H."/>
            <person name="Wambutt R."/>
            <person name="Purnelle B."/>
            <person name="Goffeau A."/>
            <person name="Cadieu E."/>
            <person name="Dreano S."/>
            <person name="Gloux S."/>
            <person name="Lelaure V."/>
            <person name="Mottier S."/>
            <person name="Galibert F."/>
            <person name="Aves S.J."/>
            <person name="Xiang Z."/>
            <person name="Hunt C."/>
            <person name="Moore K."/>
            <person name="Hurst S.M."/>
            <person name="Lucas M."/>
            <person name="Rochet M."/>
            <person name="Gaillardin C."/>
            <person name="Tallada V.A."/>
            <person name="Garzon A."/>
            <person name="Thode G."/>
            <person name="Daga R.R."/>
            <person name="Cruzado L."/>
            <person name="Jimenez J."/>
            <person name="Sanchez M."/>
            <person name="del Rey F."/>
            <person name="Benito J."/>
            <person name="Dominguez A."/>
            <person name="Revuelta J.L."/>
            <person name="Moreno S."/>
            <person name="Armstrong J."/>
            <person name="Forsburg S.L."/>
            <person name="Cerutti L."/>
            <person name="Lowe T."/>
            <person name="McCombie W.R."/>
            <person name="Paulsen I."/>
            <person name="Potashkin J."/>
            <person name="Shpakovski G.V."/>
            <person name="Ussery D."/>
            <person name="Barrell B.G."/>
            <person name="Nurse P."/>
        </authorList>
    </citation>
    <scope>NUCLEOTIDE SEQUENCE [LARGE SCALE GENOMIC DNA]</scope>
    <source>
        <strain>972 / ATCC 24843</strain>
    </source>
</reference>
<reference key="2">
    <citation type="journal article" date="2002" name="Yeast">
        <title>Genome-wide search of Schizosaccharomyces pombe genes causing overexpression-mediated cell cycle defects.</title>
        <authorList>
            <person name="Tallada V.A."/>
            <person name="Daga R.R."/>
            <person name="Palomeque C."/>
            <person name="Garzon A."/>
            <person name="Jimenez J."/>
        </authorList>
    </citation>
    <scope>FUNCTION</scope>
    <source>
        <strain>972 / ATCC 24843</strain>
    </source>
</reference>
<reference key="3">
    <citation type="journal article" date="2004" name="Yeast">
        <title>Identification of genes encoding putative nucleoporins and transport factors in the fission yeast Schizosaccharomyces pombe: a deletion analysis.</title>
        <authorList>
            <person name="Chen X.Q."/>
            <person name="Du X."/>
            <person name="Liu J."/>
            <person name="Balasubramanian M.K."/>
            <person name="Balasundaram D."/>
        </authorList>
    </citation>
    <scope>FUNCTION</scope>
    <scope>SUBCELLULAR LOCATION</scope>
</reference>
<reference key="4">
    <citation type="journal article" date="2005" name="Genetics">
        <title>The fission yeast Schizosaccharomyces pombe has two importin-alpha proteins, Imp1p and Cut15p, which have common and unique functions in nucleocytoplasmic transport and cell cycle progression.</title>
        <authorList>
            <person name="Umeda M."/>
            <person name="Izaddoost S."/>
            <person name="Cushman I."/>
            <person name="Moore M.S."/>
            <person name="Sazer S."/>
        </authorList>
    </citation>
    <scope>FUNCTION</scope>
    <scope>INTERACTION WITH PAP1</scope>
    <scope>SUBCELLULAR LOCATION</scope>
</reference>
<reference key="5">
    <citation type="journal article" date="2006" name="Nat. Biotechnol.">
        <title>ORFeome cloning and global analysis of protein localization in the fission yeast Schizosaccharomyces pombe.</title>
        <authorList>
            <person name="Matsuyama A."/>
            <person name="Arai R."/>
            <person name="Yashiroda Y."/>
            <person name="Shirai A."/>
            <person name="Kamata A."/>
            <person name="Sekido S."/>
            <person name="Kobayashi Y."/>
            <person name="Hashimoto A."/>
            <person name="Hamamoto M."/>
            <person name="Hiraoka Y."/>
            <person name="Horinouchi S."/>
            <person name="Yoshida M."/>
        </authorList>
    </citation>
    <scope>SUBCELLULAR LOCATION [LARGE SCALE ANALYSIS]</scope>
</reference>
<name>IMA2_SCHPO</name>
<feature type="chain" id="PRO_0000290665" description="Importin subunit alpha-2">
    <location>
        <begin position="1"/>
        <end position="539"/>
    </location>
</feature>
<feature type="domain" description="IBB" evidence="1">
    <location>
        <begin position="1"/>
        <end position="57"/>
    </location>
</feature>
<feature type="repeat" description="ARM 1">
    <location>
        <begin position="110"/>
        <end position="149"/>
    </location>
</feature>
<feature type="repeat" description="ARM 2">
    <location>
        <begin position="152"/>
        <end position="191"/>
    </location>
</feature>
<feature type="repeat" description="ARM 3">
    <location>
        <begin position="194"/>
        <end position="235"/>
    </location>
</feature>
<feature type="repeat" description="ARM 4">
    <location>
        <begin position="238"/>
        <end position="277"/>
    </location>
</feature>
<feature type="repeat" description="ARM 5">
    <location>
        <begin position="280"/>
        <end position="319"/>
    </location>
</feature>
<feature type="repeat" description="ARM 6">
    <location>
        <begin position="322"/>
        <end position="361"/>
    </location>
</feature>
<feature type="repeat" description="ARM 7">
    <location>
        <begin position="364"/>
        <end position="403"/>
    </location>
</feature>
<feature type="repeat" description="ARM 8">
    <location>
        <begin position="409"/>
        <end position="448"/>
    </location>
</feature>
<gene>
    <name type="primary">imp1</name>
    <name type="ORF">SPBC1604.08c</name>
</gene>
<keyword id="KW-0131">Cell cycle</keyword>
<keyword id="KW-0132">Cell division</keyword>
<keyword id="KW-0963">Cytoplasm</keyword>
<keyword id="KW-0498">Mitosis</keyword>
<keyword id="KW-0539">Nucleus</keyword>
<keyword id="KW-0653">Protein transport</keyword>
<keyword id="KW-1185">Reference proteome</keyword>
<keyword id="KW-0677">Repeat</keyword>
<keyword id="KW-0813">Transport</keyword>
<protein>
    <recommendedName>
        <fullName>Importin subunit alpha-2</fullName>
    </recommendedName>
    <alternativeName>
        <fullName>Importin-1</fullName>
    </alternativeName>
    <alternativeName>
        <fullName>Karyopherin subunit alpha-2</fullName>
    </alternativeName>
</protein>
<comment type="function">
    <text evidence="2 3 4">Functions as a component of the nuclear pore complex (NPC). NPC components, collectively referred to as nucleoporins (NUPs), can play the role of both NPC structural components and of docking or interaction partners for transiently associated nuclear transport factors. Active directional transport is assured by both, a Phe-Gly (FG) repeat affinity gradient for these transport factors across the NPC and a transport cofactor concentration gradient across the nuclear envelope. Involved in nuclear protein import. Required for efficient nuclera import of both an SV40 nuclear localization signal-containing reporter protein and the pap1 component of the stress response MAP kinase pathway. Required for proper mitotic progression.</text>
</comment>
<comment type="subunit">
    <text evidence="4">Interacts with pap1.</text>
</comment>
<comment type="subcellular location">
    <subcellularLocation>
        <location>Cytoplasm</location>
    </subcellularLocation>
    <subcellularLocation>
        <location>Nucleus</location>
        <location>Nucleolus</location>
    </subcellularLocation>
    <text>Nucleus; nucleolus; nuclear rim.</text>
</comment>
<comment type="similarity">
    <text evidence="5">Belongs to the importin alpha family.</text>
</comment>
<sequence>MESRYLSDRRSRFKSKGVFKADELRRQREEQQIEIRKQKREESLNKRRNLNAVLQNDIDVEEEADQSQVQMEQQMKDEFPKLTADVMSDDIELQLGAVTKFRKYLSKETHPPIDQVIACGVVDRFVQFLESEHHLLQFEAAWALTNIASGTTDQTRIVVDSGAVPRFIQLLSSPEKDVREQVVWALGNIAGDSSACRDYVLGNGVLQPLLNILQSSASDVSMLRNATWTLSNLCRGKNPPPNWSTISVAVPILAKLLYSEDVEIIVDACWAISYLSDGPNEKIGAILDVGCAPRLVELLSSPSVNIQTPALRSVGNIVTGTDAQTQIIIDCGALNAFPSLLSHQKENIRKEACWTISNITAGNTQQIQAIIESNLIPPLVHLLSYADYKTKKEACWAISNATSGGLGQPDQIRYLVSQGVIKPLCDMLNGSDNKIIQVALDAIENILKVGEMDRTMDLENINQYAVYVEEAGGMDMIHDLQSSGNNDIYLKAYSIIEKYFSDEDAVEDLAPETENGAFTFGNGPQAQGEFKFDSQDMAM</sequence>
<organism>
    <name type="scientific">Schizosaccharomyces pombe (strain 972 / ATCC 24843)</name>
    <name type="common">Fission yeast</name>
    <dbReference type="NCBI Taxonomy" id="284812"/>
    <lineage>
        <taxon>Eukaryota</taxon>
        <taxon>Fungi</taxon>
        <taxon>Dikarya</taxon>
        <taxon>Ascomycota</taxon>
        <taxon>Taphrinomycotina</taxon>
        <taxon>Schizosaccharomycetes</taxon>
        <taxon>Schizosaccharomycetales</taxon>
        <taxon>Schizosaccharomycetaceae</taxon>
        <taxon>Schizosaccharomyces</taxon>
    </lineage>
</organism>
<proteinExistence type="evidence at protein level"/>
<accession>O94374</accession>